<name>CGL_DICDI</name>
<protein>
    <recommendedName>
        <fullName>Cystathionine gamma-lyase</fullName>
        <shortName>CGL</shortName>
        <shortName>CSE</shortName>
        <ecNumber evidence="3">4.4.1.1</ecNumber>
    </recommendedName>
    <alternativeName>
        <fullName>Cysteine desulfhydrase</fullName>
    </alternativeName>
    <alternativeName>
        <fullName>Cysteine-protein sulfhydrase</fullName>
    </alternativeName>
    <alternativeName>
        <fullName>Gamma-cystathionase</fullName>
    </alternativeName>
    <alternativeName>
        <fullName>Homocysteine desulfhydrase</fullName>
        <ecNumber evidence="3">4.4.1.2</ecNumber>
    </alternativeName>
</protein>
<keyword id="KW-0028">Amino-acid biosynthesis</keyword>
<keyword id="KW-0198">Cysteine biosynthesis</keyword>
<keyword id="KW-0963">Cytoplasm</keyword>
<keyword id="KW-0903">Direct protein sequencing</keyword>
<keyword id="KW-0456">Lyase</keyword>
<keyword id="KW-0663">Pyridoxal phosphate</keyword>
<keyword id="KW-1185">Reference proteome</keyword>
<gene>
    <name type="primary">cysA</name>
    <name type="ORF">DDB_G0269122</name>
</gene>
<comment type="function">
    <text evidence="3 4">Catalyzes the last step in the trans-sulfuration pathway from L-methionine to L-cysteine in a pyridoxal-5'-phosphate (PLP)-dependent manner, which consists on cleaving the L,L-cystathionine molecule into L-cysteine, ammonia and 2-oxobutanoate. Part of the L-cysteine derived from the trans-sulfuration pathway is utilized for biosynthesis of the ubiquitous antioxidant glutathione. Besides its role in the conversion of L-cystathionine into L-cysteine, it utilizes L-cysteine and L-homocysteine as substrates (at much lower rates than L,L-cystathionine) to produce the endogenous gaseous signaling molecule hydrogen sulfide (H2S).</text>
</comment>
<comment type="catalytic activity">
    <reaction evidence="3">
        <text>L,L-cystathionine + H2O = 2-oxobutanoate + L-cysteine + NH4(+)</text>
        <dbReference type="Rhea" id="RHEA:14005"/>
        <dbReference type="ChEBI" id="CHEBI:15377"/>
        <dbReference type="ChEBI" id="CHEBI:16763"/>
        <dbReference type="ChEBI" id="CHEBI:28938"/>
        <dbReference type="ChEBI" id="CHEBI:35235"/>
        <dbReference type="ChEBI" id="CHEBI:58161"/>
        <dbReference type="EC" id="4.4.1.1"/>
    </reaction>
    <physiologicalReaction direction="left-to-right" evidence="3">
        <dbReference type="Rhea" id="RHEA:14006"/>
    </physiologicalReaction>
</comment>
<comment type="catalytic activity">
    <reaction evidence="3">
        <text>L-cysteine + H2O = hydrogen sulfide + pyruvate + NH4(+) + H(+)</text>
        <dbReference type="Rhea" id="RHEA:24931"/>
        <dbReference type="ChEBI" id="CHEBI:15361"/>
        <dbReference type="ChEBI" id="CHEBI:15377"/>
        <dbReference type="ChEBI" id="CHEBI:15378"/>
        <dbReference type="ChEBI" id="CHEBI:28938"/>
        <dbReference type="ChEBI" id="CHEBI:29919"/>
        <dbReference type="ChEBI" id="CHEBI:35235"/>
        <dbReference type="EC" id="4.4.1.1"/>
    </reaction>
    <physiologicalReaction direction="left-to-right" evidence="3">
        <dbReference type="Rhea" id="RHEA:24932"/>
    </physiologicalReaction>
</comment>
<comment type="catalytic activity">
    <reaction evidence="3">
        <text>L-homocysteine + H2O = 2-oxobutanoate + hydrogen sulfide + NH4(+) + H(+)</text>
        <dbReference type="Rhea" id="RHEA:14501"/>
        <dbReference type="ChEBI" id="CHEBI:15377"/>
        <dbReference type="ChEBI" id="CHEBI:15378"/>
        <dbReference type="ChEBI" id="CHEBI:16763"/>
        <dbReference type="ChEBI" id="CHEBI:28938"/>
        <dbReference type="ChEBI" id="CHEBI:29919"/>
        <dbReference type="ChEBI" id="CHEBI:58199"/>
        <dbReference type="EC" id="4.4.1.2"/>
    </reaction>
    <physiologicalReaction direction="left-to-right" evidence="3">
        <dbReference type="Rhea" id="RHEA:14502"/>
    </physiologicalReaction>
</comment>
<comment type="catalytic activity">
    <reaction evidence="2">
        <text>L-homoserine = 2-oxobutanoate + NH4(+)</text>
        <dbReference type="Rhea" id="RHEA:24923"/>
        <dbReference type="ChEBI" id="CHEBI:16763"/>
        <dbReference type="ChEBI" id="CHEBI:28938"/>
        <dbReference type="ChEBI" id="CHEBI:57476"/>
        <dbReference type="EC" id="4.4.1.1"/>
    </reaction>
    <physiologicalReaction direction="left-to-right" evidence="2">
        <dbReference type="Rhea" id="RHEA:24924"/>
    </physiologicalReaction>
</comment>
<comment type="cofactor">
    <cofactor evidence="3">
        <name>pyridoxal 5'-phosphate</name>
        <dbReference type="ChEBI" id="CHEBI:597326"/>
    </cofactor>
</comment>
<comment type="pathway">
    <text evidence="3">Amino-acid biosynthesis; L-cysteine biosynthesis; L-cysteine from L-homocysteine and L-serine: step 2/2.</text>
</comment>
<comment type="subunit">
    <text evidence="3 4">Homotetramer (By similarity). Interacts with CALM in a calcium-dependent manner (By similarity).</text>
</comment>
<comment type="subcellular location">
    <subcellularLocation>
        <location evidence="1">Cytoplasm</location>
    </subcellularLocation>
</comment>
<comment type="developmental stage">
    <text evidence="5">Up-regulated in aspidocytes, a resistant cell type induced by a range of toxins including heavy metals and antibiotics.</text>
</comment>
<comment type="similarity">
    <text evidence="6">Belongs to the trans-sulfuration enzymes family.</text>
</comment>
<sequence>MTQPNNYKIGTNVIHAGQSADKNTGAVIVPISLSTTFLQPSPGVLHSEYDYSRSGNPTRKAFEECIAACENAKYALSFASGLATLTTITHLLKSGDEVISIDDVYGGTRRYFTRVAANFDLKFSFVDLSTLDDLKNAFTDKTRLVWIETPTNPLLKVADIKAVADYVHSRGATLVVDNTFMSPYFQNPLDLGADIVMHSVTKYINGHSDCVMGVLATNNDELYAKLKFLQNSIGAVPSPFDCFLALRGLKTLHVRMEAHQKNAFAICNFLEKHPKVERVIYPGLPSHPQHEICKRQMKGYGGMVVFFVKGSIDQSRSFLENIKLFALAESLGGVESLIELPSVMTHASVPAEERAKLGISDTLIRLSVGIEDINDLLADISQALDKC</sequence>
<accession>Q55DV9</accession>
<dbReference type="EC" id="4.4.1.1" evidence="3"/>
<dbReference type="EC" id="4.4.1.2" evidence="3"/>
<dbReference type="EMBL" id="AAFI02000005">
    <property type="protein sequence ID" value="EAL71911.1"/>
    <property type="molecule type" value="Genomic_DNA"/>
</dbReference>
<dbReference type="RefSeq" id="XP_646022.1">
    <property type="nucleotide sequence ID" value="XM_640930.1"/>
</dbReference>
<dbReference type="SMR" id="Q55DV9"/>
<dbReference type="FunCoup" id="Q55DV9">
    <property type="interactions" value="404"/>
</dbReference>
<dbReference type="STRING" id="44689.Q55DV9"/>
<dbReference type="PaxDb" id="44689-DDB0191318"/>
<dbReference type="EnsemblProtists" id="EAL71911">
    <property type="protein sequence ID" value="EAL71911"/>
    <property type="gene ID" value="DDB_G0269122"/>
</dbReference>
<dbReference type="GeneID" id="8616970"/>
<dbReference type="KEGG" id="ddi:DDB_G0269122"/>
<dbReference type="dictyBase" id="DDB_G0269122">
    <property type="gene designation" value="cysA"/>
</dbReference>
<dbReference type="VEuPathDB" id="AmoebaDB:DDB_G0269122"/>
<dbReference type="eggNOG" id="KOG0053">
    <property type="taxonomic scope" value="Eukaryota"/>
</dbReference>
<dbReference type="HOGENOM" id="CLU_018986_2_0_1"/>
<dbReference type="InParanoid" id="Q55DV9"/>
<dbReference type="OMA" id="YKQDGVG"/>
<dbReference type="PhylomeDB" id="Q55DV9"/>
<dbReference type="Reactome" id="R-DDI-1614558">
    <property type="pathway name" value="Degradation of cysteine and homocysteine"/>
</dbReference>
<dbReference type="Reactome" id="R-DDI-1614603">
    <property type="pathway name" value="Cysteine formation from homocysteine"/>
</dbReference>
<dbReference type="UniPathway" id="UPA00136">
    <property type="reaction ID" value="UER00202"/>
</dbReference>
<dbReference type="PRO" id="PR:Q55DV9"/>
<dbReference type="Proteomes" id="UP000002195">
    <property type="component" value="Chromosome 1"/>
</dbReference>
<dbReference type="GO" id="GO:0005737">
    <property type="term" value="C:cytoplasm"/>
    <property type="evidence" value="ECO:0000318"/>
    <property type="project" value="GO_Central"/>
</dbReference>
<dbReference type="GO" id="GO:0004123">
    <property type="term" value="F:cystathionine gamma-lyase activity"/>
    <property type="evidence" value="ECO:0000250"/>
    <property type="project" value="dictyBase"/>
</dbReference>
<dbReference type="GO" id="GO:0047982">
    <property type="term" value="F:homocysteine desulfhydrase activity"/>
    <property type="evidence" value="ECO:0007669"/>
    <property type="project" value="RHEA"/>
</dbReference>
<dbReference type="GO" id="GO:0080146">
    <property type="term" value="F:L-cysteine desulfhydrase activity"/>
    <property type="evidence" value="ECO:0007669"/>
    <property type="project" value="RHEA"/>
</dbReference>
<dbReference type="GO" id="GO:0030170">
    <property type="term" value="F:pyridoxal phosphate binding"/>
    <property type="evidence" value="ECO:0000318"/>
    <property type="project" value="GO_Central"/>
</dbReference>
<dbReference type="GO" id="GO:0019343">
    <property type="term" value="P:cysteine biosynthetic process via cystathionine"/>
    <property type="evidence" value="ECO:0000318"/>
    <property type="project" value="GO_Central"/>
</dbReference>
<dbReference type="GO" id="GO:0006534">
    <property type="term" value="P:cysteine metabolic process"/>
    <property type="evidence" value="ECO:0000250"/>
    <property type="project" value="dictyBase"/>
</dbReference>
<dbReference type="GO" id="GO:0019346">
    <property type="term" value="P:transsulfuration"/>
    <property type="evidence" value="ECO:0000318"/>
    <property type="project" value="GO_Central"/>
</dbReference>
<dbReference type="CDD" id="cd00614">
    <property type="entry name" value="CGS_like"/>
    <property type="match status" value="1"/>
</dbReference>
<dbReference type="FunFam" id="3.90.1150.10:FF:000008">
    <property type="entry name" value="Cystathionine gamma-synthase"/>
    <property type="match status" value="1"/>
</dbReference>
<dbReference type="FunFam" id="3.40.640.10:FF:000009">
    <property type="entry name" value="Cystathionine gamma-synthase homolog"/>
    <property type="match status" value="1"/>
</dbReference>
<dbReference type="Gene3D" id="3.90.1150.10">
    <property type="entry name" value="Aspartate Aminotransferase, domain 1"/>
    <property type="match status" value="1"/>
</dbReference>
<dbReference type="Gene3D" id="3.40.640.10">
    <property type="entry name" value="Type I PLP-dependent aspartate aminotransferase-like (Major domain)"/>
    <property type="match status" value="1"/>
</dbReference>
<dbReference type="InterPro" id="IPR000277">
    <property type="entry name" value="Cys/Met-Metab_PyrdxlP-dep_enz"/>
</dbReference>
<dbReference type="InterPro" id="IPR015424">
    <property type="entry name" value="PyrdxlP-dep_Trfase"/>
</dbReference>
<dbReference type="InterPro" id="IPR015421">
    <property type="entry name" value="PyrdxlP-dep_Trfase_major"/>
</dbReference>
<dbReference type="InterPro" id="IPR015422">
    <property type="entry name" value="PyrdxlP-dep_Trfase_small"/>
</dbReference>
<dbReference type="PANTHER" id="PTHR11808:SF15">
    <property type="entry name" value="CYSTATHIONINE GAMMA-LYASE"/>
    <property type="match status" value="1"/>
</dbReference>
<dbReference type="PANTHER" id="PTHR11808">
    <property type="entry name" value="TRANS-SULFURATION ENZYME FAMILY MEMBER"/>
    <property type="match status" value="1"/>
</dbReference>
<dbReference type="Pfam" id="PF01053">
    <property type="entry name" value="Cys_Met_Meta_PP"/>
    <property type="match status" value="1"/>
</dbReference>
<dbReference type="PIRSF" id="PIRSF001434">
    <property type="entry name" value="CGS"/>
    <property type="match status" value="1"/>
</dbReference>
<dbReference type="SUPFAM" id="SSF53383">
    <property type="entry name" value="PLP-dependent transferases"/>
    <property type="match status" value="1"/>
</dbReference>
<evidence type="ECO:0000250" key="1"/>
<evidence type="ECO:0000250" key="2">
    <source>
        <dbReference type="UniProtKB" id="P18757"/>
    </source>
</evidence>
<evidence type="ECO:0000250" key="3">
    <source>
        <dbReference type="UniProtKB" id="P32929"/>
    </source>
</evidence>
<evidence type="ECO:0000250" key="4">
    <source>
        <dbReference type="UniProtKB" id="Q8VCN5"/>
    </source>
</evidence>
<evidence type="ECO:0000269" key="5">
    <source>
    </source>
</evidence>
<evidence type="ECO:0000305" key="6"/>
<organism>
    <name type="scientific">Dictyostelium discoideum</name>
    <name type="common">Social amoeba</name>
    <dbReference type="NCBI Taxonomy" id="44689"/>
    <lineage>
        <taxon>Eukaryota</taxon>
        <taxon>Amoebozoa</taxon>
        <taxon>Evosea</taxon>
        <taxon>Eumycetozoa</taxon>
        <taxon>Dictyostelia</taxon>
        <taxon>Dictyosteliales</taxon>
        <taxon>Dictyosteliaceae</taxon>
        <taxon>Dictyostelium</taxon>
    </lineage>
</organism>
<reference key="1">
    <citation type="journal article" date="2005" name="Nature">
        <title>The genome of the social amoeba Dictyostelium discoideum.</title>
        <authorList>
            <person name="Eichinger L."/>
            <person name="Pachebat J.A."/>
            <person name="Gloeckner G."/>
            <person name="Rajandream M.A."/>
            <person name="Sucgang R."/>
            <person name="Berriman M."/>
            <person name="Song J."/>
            <person name="Olsen R."/>
            <person name="Szafranski K."/>
            <person name="Xu Q."/>
            <person name="Tunggal B."/>
            <person name="Kummerfeld S."/>
            <person name="Madera M."/>
            <person name="Konfortov B.A."/>
            <person name="Rivero F."/>
            <person name="Bankier A.T."/>
            <person name="Lehmann R."/>
            <person name="Hamlin N."/>
            <person name="Davies R."/>
            <person name="Gaudet P."/>
            <person name="Fey P."/>
            <person name="Pilcher K."/>
            <person name="Chen G."/>
            <person name="Saunders D."/>
            <person name="Sodergren E.J."/>
            <person name="Davis P."/>
            <person name="Kerhornou A."/>
            <person name="Nie X."/>
            <person name="Hall N."/>
            <person name="Anjard C."/>
            <person name="Hemphill L."/>
            <person name="Bason N."/>
            <person name="Farbrother P."/>
            <person name="Desany B."/>
            <person name="Just E."/>
            <person name="Morio T."/>
            <person name="Rost R."/>
            <person name="Churcher C.M."/>
            <person name="Cooper J."/>
            <person name="Haydock S."/>
            <person name="van Driessche N."/>
            <person name="Cronin A."/>
            <person name="Goodhead I."/>
            <person name="Muzny D.M."/>
            <person name="Mourier T."/>
            <person name="Pain A."/>
            <person name="Lu M."/>
            <person name="Harper D."/>
            <person name="Lindsay R."/>
            <person name="Hauser H."/>
            <person name="James K.D."/>
            <person name="Quiles M."/>
            <person name="Madan Babu M."/>
            <person name="Saito T."/>
            <person name="Buchrieser C."/>
            <person name="Wardroper A."/>
            <person name="Felder M."/>
            <person name="Thangavelu M."/>
            <person name="Johnson D."/>
            <person name="Knights A."/>
            <person name="Loulseged H."/>
            <person name="Mungall K.L."/>
            <person name="Oliver K."/>
            <person name="Price C."/>
            <person name="Quail M.A."/>
            <person name="Urushihara H."/>
            <person name="Hernandez J."/>
            <person name="Rabbinowitsch E."/>
            <person name="Steffen D."/>
            <person name="Sanders M."/>
            <person name="Ma J."/>
            <person name="Kohara Y."/>
            <person name="Sharp S."/>
            <person name="Simmonds M.N."/>
            <person name="Spiegler S."/>
            <person name="Tivey A."/>
            <person name="Sugano S."/>
            <person name="White B."/>
            <person name="Walker D."/>
            <person name="Woodward J.R."/>
            <person name="Winckler T."/>
            <person name="Tanaka Y."/>
            <person name="Shaulsky G."/>
            <person name="Schleicher M."/>
            <person name="Weinstock G.M."/>
            <person name="Rosenthal A."/>
            <person name="Cox E.C."/>
            <person name="Chisholm R.L."/>
            <person name="Gibbs R.A."/>
            <person name="Loomis W.F."/>
            <person name="Platzer M."/>
            <person name="Kay R.R."/>
            <person name="Williams J.G."/>
            <person name="Dear P.H."/>
            <person name="Noegel A.A."/>
            <person name="Barrell B.G."/>
            <person name="Kuspa A."/>
        </authorList>
    </citation>
    <scope>NUCLEOTIDE SEQUENCE [LARGE SCALE GENOMIC DNA]</scope>
    <source>
        <strain>AX4</strain>
    </source>
</reference>
<reference key="2">
    <citation type="submission" date="2010-01" db="UniProtKB">
        <authorList>
            <person name="Bienvenut W.V."/>
            <person name="Veltman D.M."/>
            <person name="Insall R.H."/>
        </authorList>
    </citation>
    <scope>PROTEIN SEQUENCE OF 9-22 AND 357-365</scope>
    <scope>IDENTIFICATION BY MASS SPECTROMETRY</scope>
</reference>
<reference key="3">
    <citation type="journal article" date="2007" name="Microbiology">
        <title>A new environmentally resistant cell type from Dictyostelium.</title>
        <authorList>
            <person name="Serafimidis I."/>
            <person name="Bloomfield G."/>
            <person name="Skelton J."/>
            <person name="Ivens A."/>
            <person name="Kay R.R."/>
        </authorList>
    </citation>
    <scope>DEVELOPMENTAL STAGE</scope>
</reference>
<proteinExistence type="evidence at protein level"/>
<feature type="chain" id="PRO_0000327889" description="Cystathionine gamma-lyase">
    <location>
        <begin position="1"/>
        <end position="387"/>
    </location>
</feature>
<feature type="binding site" evidence="1">
    <location>
        <position position="53"/>
    </location>
    <ligand>
        <name>substrate</name>
    </ligand>
</feature>
<feature type="binding site" evidence="1">
    <location>
        <position position="105"/>
    </location>
    <ligand>
        <name>substrate</name>
    </ligand>
</feature>
<feature type="binding site" evidence="1">
    <location>
        <position position="110"/>
    </location>
    <ligand>
        <name>substrate</name>
    </ligand>
</feature>
<feature type="binding site" evidence="1">
    <location>
        <position position="329"/>
    </location>
    <ligand>
        <name>substrate</name>
    </ligand>
</feature>
<feature type="modified residue" description="N6-(pyridoxal phosphate)lysine" evidence="3">
    <location>
        <position position="202"/>
    </location>
</feature>